<sequence>MAPVALLSVSDKSGLLPLAEALHRIHGYQLLSSGGTAKVLEQAGLPVTRVSEYTGAPEILGGRVKTLHPRVHGGILAKRGDAAHQNDLEQQNINFIDVVVVNLYPFRETVAKADVTWDQAIENIDIGGPTMVRSAAKNHADVAVLTSPDQYDRLLEAMAQAGGEVPAALRRQLALEAFQHTAAYDTAISRWMDQAVAADGSPWLEAVPLRQTLRYGENPHQKARWYSHAQQGWGGAVQLQGKELSTNNLLDLEAALAMVREFGYGSDGAEPAVQPAAVVVKHTNPCGVAIGSDVSTALTRALDADRVSAFGGIVAINGVVSAAAAGELKSLFLECVVAPSFSPEAREILAAKANLRLLELQPAAIDAAGPDHVRSILGGLLVQDLDDQAITPSEWTVASQRPPSSQEQQDLEFAWRLVRHVRSNAIVVASKGQSLGIGAGQMNRVGSARLALDAAGDQATGAVLASDGFFPFDDTVRLAASHGITAVIHPGGSLRDADSIKACDELGLAMLLTGRRHFLH</sequence>
<comment type="catalytic activity">
    <reaction evidence="1">
        <text>(6R)-10-formyltetrahydrofolate + 5-amino-1-(5-phospho-beta-D-ribosyl)imidazole-4-carboxamide = 5-formamido-1-(5-phospho-D-ribosyl)imidazole-4-carboxamide + (6S)-5,6,7,8-tetrahydrofolate</text>
        <dbReference type="Rhea" id="RHEA:22192"/>
        <dbReference type="ChEBI" id="CHEBI:57453"/>
        <dbReference type="ChEBI" id="CHEBI:58467"/>
        <dbReference type="ChEBI" id="CHEBI:58475"/>
        <dbReference type="ChEBI" id="CHEBI:195366"/>
        <dbReference type="EC" id="2.1.2.3"/>
    </reaction>
</comment>
<comment type="catalytic activity">
    <reaction evidence="1">
        <text>IMP + H2O = 5-formamido-1-(5-phospho-D-ribosyl)imidazole-4-carboxamide</text>
        <dbReference type="Rhea" id="RHEA:18445"/>
        <dbReference type="ChEBI" id="CHEBI:15377"/>
        <dbReference type="ChEBI" id="CHEBI:58053"/>
        <dbReference type="ChEBI" id="CHEBI:58467"/>
        <dbReference type="EC" id="3.5.4.10"/>
    </reaction>
</comment>
<comment type="pathway">
    <text evidence="1">Purine metabolism; IMP biosynthesis via de novo pathway; 5-formamido-1-(5-phospho-D-ribosyl)imidazole-4-carboxamide from 5-amino-1-(5-phospho-D-ribosyl)imidazole-4-carboxamide (10-formyl THF route): step 1/1.</text>
</comment>
<comment type="pathway">
    <text evidence="1">Purine metabolism; IMP biosynthesis via de novo pathway; IMP from 5-formamido-1-(5-phospho-D-ribosyl)imidazole-4-carboxamide: step 1/1.</text>
</comment>
<comment type="domain">
    <text evidence="1">The IMP cyclohydrolase activity resides in the N-terminal region.</text>
</comment>
<comment type="similarity">
    <text evidence="1">Belongs to the PurH family.</text>
</comment>
<reference key="1">
    <citation type="submission" date="2005-08" db="EMBL/GenBank/DDBJ databases">
        <title>Complete sequence of Synechococcus sp. CC9902.</title>
        <authorList>
            <person name="Copeland A."/>
            <person name="Lucas S."/>
            <person name="Lapidus A."/>
            <person name="Barry K."/>
            <person name="Detter J.C."/>
            <person name="Glavina T."/>
            <person name="Hammon N."/>
            <person name="Israni S."/>
            <person name="Pitluck S."/>
            <person name="Martinez M."/>
            <person name="Schmutz J."/>
            <person name="Larimer F."/>
            <person name="Land M."/>
            <person name="Kyrpides N."/>
            <person name="Ivanova N."/>
            <person name="Richardson P."/>
        </authorList>
    </citation>
    <scope>NUCLEOTIDE SEQUENCE [LARGE SCALE GENOMIC DNA]</scope>
    <source>
        <strain>CC9902</strain>
    </source>
</reference>
<feature type="chain" id="PRO_1000018981" description="Bifunctional purine biosynthesis protein PurH">
    <location>
        <begin position="1"/>
        <end position="520"/>
    </location>
</feature>
<feature type="domain" description="MGS-like" evidence="2">
    <location>
        <begin position="1"/>
        <end position="146"/>
    </location>
</feature>
<dbReference type="EC" id="2.1.2.3" evidence="1"/>
<dbReference type="EC" id="3.5.4.10" evidence="1"/>
<dbReference type="EMBL" id="CP000097">
    <property type="protein sequence ID" value="ABB25245.1"/>
    <property type="molecule type" value="Genomic_DNA"/>
</dbReference>
<dbReference type="RefSeq" id="WP_011359105.1">
    <property type="nucleotide sequence ID" value="NC_007513.1"/>
</dbReference>
<dbReference type="SMR" id="Q3B083"/>
<dbReference type="STRING" id="316279.Syncc9902_0272"/>
<dbReference type="KEGG" id="sye:Syncc9902_0272"/>
<dbReference type="eggNOG" id="COG0138">
    <property type="taxonomic scope" value="Bacteria"/>
</dbReference>
<dbReference type="HOGENOM" id="CLU_016316_5_2_3"/>
<dbReference type="OrthoDB" id="9802065at2"/>
<dbReference type="UniPathway" id="UPA00074">
    <property type="reaction ID" value="UER00133"/>
</dbReference>
<dbReference type="UniPathway" id="UPA00074">
    <property type="reaction ID" value="UER00135"/>
</dbReference>
<dbReference type="Proteomes" id="UP000002712">
    <property type="component" value="Chromosome"/>
</dbReference>
<dbReference type="GO" id="GO:0005829">
    <property type="term" value="C:cytosol"/>
    <property type="evidence" value="ECO:0007669"/>
    <property type="project" value="TreeGrafter"/>
</dbReference>
<dbReference type="GO" id="GO:0003937">
    <property type="term" value="F:IMP cyclohydrolase activity"/>
    <property type="evidence" value="ECO:0007669"/>
    <property type="project" value="UniProtKB-UniRule"/>
</dbReference>
<dbReference type="GO" id="GO:0004643">
    <property type="term" value="F:phosphoribosylaminoimidazolecarboxamide formyltransferase activity"/>
    <property type="evidence" value="ECO:0007669"/>
    <property type="project" value="UniProtKB-UniRule"/>
</dbReference>
<dbReference type="GO" id="GO:0006189">
    <property type="term" value="P:'de novo' IMP biosynthetic process"/>
    <property type="evidence" value="ECO:0007669"/>
    <property type="project" value="UniProtKB-UniRule"/>
</dbReference>
<dbReference type="CDD" id="cd01421">
    <property type="entry name" value="IMPCH"/>
    <property type="match status" value="1"/>
</dbReference>
<dbReference type="FunFam" id="3.40.140.20:FF:000001">
    <property type="entry name" value="Bifunctional purine biosynthesis protein PurH"/>
    <property type="match status" value="1"/>
</dbReference>
<dbReference type="FunFam" id="3.40.50.1380:FF:000001">
    <property type="entry name" value="Bifunctional purine biosynthesis protein PurH"/>
    <property type="match status" value="1"/>
</dbReference>
<dbReference type="Gene3D" id="3.40.140.20">
    <property type="match status" value="2"/>
</dbReference>
<dbReference type="Gene3D" id="3.40.50.1380">
    <property type="entry name" value="Methylglyoxal synthase-like domain"/>
    <property type="match status" value="1"/>
</dbReference>
<dbReference type="HAMAP" id="MF_00139">
    <property type="entry name" value="PurH"/>
    <property type="match status" value="1"/>
</dbReference>
<dbReference type="InterPro" id="IPR024051">
    <property type="entry name" value="AICAR_Tfase_dup_dom_sf"/>
</dbReference>
<dbReference type="InterPro" id="IPR016193">
    <property type="entry name" value="Cytidine_deaminase-like"/>
</dbReference>
<dbReference type="InterPro" id="IPR011607">
    <property type="entry name" value="MGS-like_dom"/>
</dbReference>
<dbReference type="InterPro" id="IPR036914">
    <property type="entry name" value="MGS-like_dom_sf"/>
</dbReference>
<dbReference type="InterPro" id="IPR002695">
    <property type="entry name" value="PurH-like"/>
</dbReference>
<dbReference type="NCBIfam" id="NF002049">
    <property type="entry name" value="PRK00881.1"/>
    <property type="match status" value="1"/>
</dbReference>
<dbReference type="NCBIfam" id="TIGR00355">
    <property type="entry name" value="purH"/>
    <property type="match status" value="1"/>
</dbReference>
<dbReference type="PANTHER" id="PTHR11692:SF0">
    <property type="entry name" value="BIFUNCTIONAL PURINE BIOSYNTHESIS PROTEIN ATIC"/>
    <property type="match status" value="1"/>
</dbReference>
<dbReference type="PANTHER" id="PTHR11692">
    <property type="entry name" value="BIFUNCTIONAL PURINE BIOSYNTHESIS PROTEIN PURH"/>
    <property type="match status" value="1"/>
</dbReference>
<dbReference type="Pfam" id="PF01808">
    <property type="entry name" value="AICARFT_IMPCHas"/>
    <property type="match status" value="1"/>
</dbReference>
<dbReference type="Pfam" id="PF02142">
    <property type="entry name" value="MGS"/>
    <property type="match status" value="1"/>
</dbReference>
<dbReference type="PIRSF" id="PIRSF000414">
    <property type="entry name" value="AICARFT_IMPCHas"/>
    <property type="match status" value="1"/>
</dbReference>
<dbReference type="SMART" id="SM00798">
    <property type="entry name" value="AICARFT_IMPCHas"/>
    <property type="match status" value="1"/>
</dbReference>
<dbReference type="SMART" id="SM00851">
    <property type="entry name" value="MGS"/>
    <property type="match status" value="1"/>
</dbReference>
<dbReference type="SUPFAM" id="SSF53927">
    <property type="entry name" value="Cytidine deaminase-like"/>
    <property type="match status" value="1"/>
</dbReference>
<dbReference type="SUPFAM" id="SSF52335">
    <property type="entry name" value="Methylglyoxal synthase-like"/>
    <property type="match status" value="1"/>
</dbReference>
<dbReference type="PROSITE" id="PS51855">
    <property type="entry name" value="MGS"/>
    <property type="match status" value="1"/>
</dbReference>
<protein>
    <recommendedName>
        <fullName evidence="1">Bifunctional purine biosynthesis protein PurH</fullName>
    </recommendedName>
    <domain>
        <recommendedName>
            <fullName evidence="1">Phosphoribosylaminoimidazolecarboxamide formyltransferase</fullName>
            <ecNumber evidence="1">2.1.2.3</ecNumber>
        </recommendedName>
        <alternativeName>
            <fullName evidence="1">AICAR transformylase</fullName>
        </alternativeName>
    </domain>
    <domain>
        <recommendedName>
            <fullName evidence="1">IMP cyclohydrolase</fullName>
            <ecNumber evidence="1">3.5.4.10</ecNumber>
        </recommendedName>
        <alternativeName>
            <fullName evidence="1">ATIC</fullName>
        </alternativeName>
        <alternativeName>
            <fullName evidence="1">IMP synthase</fullName>
        </alternativeName>
        <alternativeName>
            <fullName evidence="1">Inosinicase</fullName>
        </alternativeName>
    </domain>
</protein>
<keyword id="KW-0378">Hydrolase</keyword>
<keyword id="KW-0511">Multifunctional enzyme</keyword>
<keyword id="KW-0658">Purine biosynthesis</keyword>
<keyword id="KW-1185">Reference proteome</keyword>
<keyword id="KW-0808">Transferase</keyword>
<gene>
    <name evidence="1" type="primary">purH</name>
    <name type="ordered locus">Syncc9902_0272</name>
</gene>
<proteinExistence type="inferred from homology"/>
<organism>
    <name type="scientific">Synechococcus sp. (strain CC9902)</name>
    <dbReference type="NCBI Taxonomy" id="316279"/>
    <lineage>
        <taxon>Bacteria</taxon>
        <taxon>Bacillati</taxon>
        <taxon>Cyanobacteriota</taxon>
        <taxon>Cyanophyceae</taxon>
        <taxon>Synechococcales</taxon>
        <taxon>Synechococcaceae</taxon>
        <taxon>Synechococcus</taxon>
    </lineage>
</organism>
<evidence type="ECO:0000255" key="1">
    <source>
        <dbReference type="HAMAP-Rule" id="MF_00139"/>
    </source>
</evidence>
<evidence type="ECO:0000255" key="2">
    <source>
        <dbReference type="PROSITE-ProRule" id="PRU01202"/>
    </source>
</evidence>
<name>PUR9_SYNS9</name>
<accession>Q3B083</accession>